<dbReference type="EC" id="3.2.1.8"/>
<dbReference type="EMBL" id="D13325">
    <property type="protein sequence ID" value="BAA02584.1"/>
    <property type="molecule type" value="Genomic_DNA"/>
</dbReference>
<dbReference type="SMR" id="P33558"/>
<dbReference type="CAZy" id="CBM6">
    <property type="family name" value="Carbohydrate-Binding Module Family 6"/>
</dbReference>
<dbReference type="CAZy" id="GH11">
    <property type="family name" value="Glycoside Hydrolase Family 11"/>
</dbReference>
<dbReference type="UniPathway" id="UPA00114"/>
<dbReference type="GO" id="GO:0030246">
    <property type="term" value="F:carbohydrate binding"/>
    <property type="evidence" value="ECO:0007669"/>
    <property type="project" value="InterPro"/>
</dbReference>
<dbReference type="GO" id="GO:0031176">
    <property type="term" value="F:endo-1,4-beta-xylanase activity"/>
    <property type="evidence" value="ECO:0007669"/>
    <property type="project" value="UniProtKB-EC"/>
</dbReference>
<dbReference type="GO" id="GO:0046872">
    <property type="term" value="F:metal ion binding"/>
    <property type="evidence" value="ECO:0007669"/>
    <property type="project" value="UniProtKB-KW"/>
</dbReference>
<dbReference type="GO" id="GO:0030245">
    <property type="term" value="P:cellulose catabolic process"/>
    <property type="evidence" value="ECO:0007669"/>
    <property type="project" value="UniProtKB-KW"/>
</dbReference>
<dbReference type="GO" id="GO:0045493">
    <property type="term" value="P:xylan catabolic process"/>
    <property type="evidence" value="ECO:0007669"/>
    <property type="project" value="UniProtKB-UniPathway"/>
</dbReference>
<dbReference type="CDD" id="cd04084">
    <property type="entry name" value="CBM6_xylanase-like"/>
    <property type="match status" value="2"/>
</dbReference>
<dbReference type="Gene3D" id="2.60.120.180">
    <property type="match status" value="1"/>
</dbReference>
<dbReference type="Gene3D" id="2.60.120.260">
    <property type="entry name" value="Galactose-binding domain-like"/>
    <property type="match status" value="2"/>
</dbReference>
<dbReference type="InterPro" id="IPR005084">
    <property type="entry name" value="CBM6"/>
</dbReference>
<dbReference type="InterPro" id="IPR006584">
    <property type="entry name" value="Cellulose-bd_IV"/>
</dbReference>
<dbReference type="InterPro" id="IPR013320">
    <property type="entry name" value="ConA-like_dom_sf"/>
</dbReference>
<dbReference type="InterPro" id="IPR008979">
    <property type="entry name" value="Galactose-bd-like_sf"/>
</dbReference>
<dbReference type="InterPro" id="IPR013319">
    <property type="entry name" value="GH11/12"/>
</dbReference>
<dbReference type="InterPro" id="IPR018208">
    <property type="entry name" value="GH11_AS_1"/>
</dbReference>
<dbReference type="InterPro" id="IPR033119">
    <property type="entry name" value="GH11_AS_2"/>
</dbReference>
<dbReference type="InterPro" id="IPR033123">
    <property type="entry name" value="GH11_dom"/>
</dbReference>
<dbReference type="InterPro" id="IPR001137">
    <property type="entry name" value="Glyco_hydro_11"/>
</dbReference>
<dbReference type="PANTHER" id="PTHR46828">
    <property type="entry name" value="ENDO-1,4-BETA-XYLANASE A-RELATED"/>
    <property type="match status" value="1"/>
</dbReference>
<dbReference type="PANTHER" id="PTHR46828:SF2">
    <property type="entry name" value="ENDO-1,4-BETA-XYLANASE A-RELATED"/>
    <property type="match status" value="1"/>
</dbReference>
<dbReference type="Pfam" id="PF03422">
    <property type="entry name" value="CBM_6"/>
    <property type="match status" value="2"/>
</dbReference>
<dbReference type="Pfam" id="PF00457">
    <property type="entry name" value="Glyco_hydro_11"/>
    <property type="match status" value="1"/>
</dbReference>
<dbReference type="PRINTS" id="PR00911">
    <property type="entry name" value="GLHYDRLASE11"/>
</dbReference>
<dbReference type="SMART" id="SM00606">
    <property type="entry name" value="CBD_IV"/>
    <property type="match status" value="2"/>
</dbReference>
<dbReference type="SUPFAM" id="SSF49899">
    <property type="entry name" value="Concanavalin A-like lectins/glucanases"/>
    <property type="match status" value="1"/>
</dbReference>
<dbReference type="SUPFAM" id="SSF49785">
    <property type="entry name" value="Galactose-binding domain-like"/>
    <property type="match status" value="2"/>
</dbReference>
<dbReference type="PROSITE" id="PS51175">
    <property type="entry name" value="CBM6"/>
    <property type="match status" value="2"/>
</dbReference>
<dbReference type="PROSITE" id="PS00776">
    <property type="entry name" value="GH11_1"/>
    <property type="match status" value="1"/>
</dbReference>
<dbReference type="PROSITE" id="PS00777">
    <property type="entry name" value="GH11_2"/>
    <property type="match status" value="1"/>
</dbReference>
<dbReference type="PROSITE" id="PS51761">
    <property type="entry name" value="GH11_3"/>
    <property type="match status" value="1"/>
</dbReference>
<protein>
    <recommendedName>
        <fullName>Endo-1,4-beta-xylanase A</fullName>
        <shortName>Xylanase A</shortName>
        <ecNumber>3.2.1.8</ecNumber>
    </recommendedName>
    <alternativeName>
        <fullName>1,4-beta-D-xylan xylanohydrolase A</fullName>
    </alternativeName>
</protein>
<keyword id="KW-0106">Calcium</keyword>
<keyword id="KW-0119">Carbohydrate metabolism</keyword>
<keyword id="KW-0136">Cellulose degradation</keyword>
<keyword id="KW-0903">Direct protein sequencing</keyword>
<keyword id="KW-0326">Glycosidase</keyword>
<keyword id="KW-0378">Hydrolase</keyword>
<keyword id="KW-0479">Metal-binding</keyword>
<keyword id="KW-0624">Polysaccharide degradation</keyword>
<keyword id="KW-0677">Repeat</keyword>
<keyword id="KW-0732">Signal</keyword>
<keyword id="KW-0858">Xylan degradation</keyword>
<organism>
    <name type="scientific">Thermoclostridium stercorarium</name>
    <name type="common">Clostridium stercorarium</name>
    <dbReference type="NCBI Taxonomy" id="1510"/>
    <lineage>
        <taxon>Bacteria</taxon>
        <taxon>Bacillati</taxon>
        <taxon>Bacillota</taxon>
        <taxon>Clostridia</taxon>
        <taxon>Eubacteriales</taxon>
        <taxon>Oscillospiraceae</taxon>
        <taxon>Thermoclostridium</taxon>
    </lineage>
</organism>
<accession>P33558</accession>
<proteinExistence type="evidence at protein level"/>
<name>XYNA2_THEST</name>
<feature type="signal peptide" evidence="3">
    <location>
        <begin position="1"/>
        <end position="30"/>
    </location>
</feature>
<feature type="chain" id="PRO_0000008002" description="Endo-1,4-beta-xylanase A">
    <location>
        <begin position="31"/>
        <end position="512"/>
    </location>
</feature>
<feature type="domain" description="GH11" evidence="5">
    <location>
        <begin position="33"/>
        <end position="228"/>
    </location>
</feature>
<feature type="domain" description="CBM6 1" evidence="4">
    <location>
        <begin position="251"/>
        <end position="371"/>
    </location>
</feature>
<feature type="repeat" description="1">
    <location>
        <begin position="279"/>
        <end position="340"/>
    </location>
</feature>
<feature type="domain" description="CBM6 2" evidence="4">
    <location>
        <begin position="388"/>
        <end position="508"/>
    </location>
</feature>
<feature type="repeat" description="2">
    <location>
        <begin position="416"/>
        <end position="477"/>
    </location>
</feature>
<feature type="region of interest" description="2 X 61 AA approximate repeats">
    <location>
        <begin position="279"/>
        <end position="477"/>
    </location>
</feature>
<feature type="active site" description="Nucleophile" evidence="6">
    <location>
        <position position="124"/>
    </location>
</feature>
<feature type="active site" description="Proton donor" evidence="7">
    <location>
        <position position="215"/>
    </location>
</feature>
<feature type="binding site" evidence="2">
    <location>
        <position position="254"/>
    </location>
    <ligand>
        <name>Ca(2+)</name>
        <dbReference type="ChEBI" id="CHEBI:29108"/>
        <label>1</label>
    </ligand>
</feature>
<feature type="binding site" evidence="2">
    <location>
        <position position="256"/>
    </location>
    <ligand>
        <name>Ca(2+)</name>
        <dbReference type="ChEBI" id="CHEBI:29108"/>
        <label>1</label>
    </ligand>
</feature>
<feature type="binding site" evidence="2">
    <location>
        <position position="271"/>
    </location>
    <ligand>
        <name>D-xylotriose</name>
        <dbReference type="ChEBI" id="CHEBI:62783"/>
        <label>1</label>
    </ligand>
</feature>
<feature type="binding site" evidence="2">
    <location>
        <position position="276"/>
    </location>
    <ligand>
        <name>Ca(2+)</name>
        <dbReference type="ChEBI" id="CHEBI:29108"/>
        <label>1</label>
    </ligand>
</feature>
<feature type="binding site" evidence="2">
    <location>
        <position position="280"/>
    </location>
    <ligand>
        <name>D-xylobiose</name>
        <dbReference type="ChEBI" id="CHEBI:28309"/>
    </ligand>
</feature>
<feature type="binding site" evidence="2">
    <location>
        <position position="280"/>
    </location>
    <ligand>
        <name>D-xylotriose</name>
        <dbReference type="ChEBI" id="CHEBI:62783"/>
        <label>1</label>
    </ligand>
</feature>
<feature type="binding site" evidence="2">
    <location>
        <position position="337"/>
    </location>
    <ligand>
        <name>D-xylobiose</name>
        <dbReference type="ChEBI" id="CHEBI:28309"/>
    </ligand>
</feature>
<feature type="binding site" evidence="2">
    <location>
        <position position="337"/>
    </location>
    <ligand>
        <name>D-xylotriose</name>
        <dbReference type="ChEBI" id="CHEBI:62783"/>
        <label>1</label>
    </ligand>
</feature>
<feature type="binding site" evidence="2">
    <location>
        <position position="364"/>
    </location>
    <ligand>
        <name>D-xylobiose</name>
        <dbReference type="ChEBI" id="CHEBI:28309"/>
    </ligand>
</feature>
<feature type="binding site" evidence="2">
    <location>
        <position position="364"/>
    </location>
    <ligand>
        <name>D-xylotriose</name>
        <dbReference type="ChEBI" id="CHEBI:62783"/>
        <label>1</label>
    </ligand>
</feature>
<feature type="binding site" evidence="2">
    <location>
        <position position="366"/>
    </location>
    <ligand>
        <name>Ca(2+)</name>
        <dbReference type="ChEBI" id="CHEBI:29108"/>
        <label>1</label>
    </ligand>
</feature>
<feature type="binding site" evidence="2">
    <location>
        <position position="391"/>
    </location>
    <ligand>
        <name>Ca(2+)</name>
        <dbReference type="ChEBI" id="CHEBI:29108"/>
        <label>2</label>
    </ligand>
</feature>
<feature type="binding site" evidence="2">
    <location>
        <position position="393"/>
    </location>
    <ligand>
        <name>Ca(2+)</name>
        <dbReference type="ChEBI" id="CHEBI:29108"/>
        <label>2</label>
    </ligand>
</feature>
<feature type="binding site" evidence="2">
    <location>
        <position position="413"/>
    </location>
    <ligand>
        <name>Ca(2+)</name>
        <dbReference type="ChEBI" id="CHEBI:29108"/>
        <label>2</label>
    </ligand>
</feature>
<feature type="binding site" evidence="2">
    <location>
        <position position="417"/>
    </location>
    <ligand>
        <name>D-xylotriose</name>
        <dbReference type="ChEBI" id="CHEBI:62783"/>
        <label>2</label>
    </ligand>
</feature>
<feature type="binding site" evidence="2">
    <location>
        <position position="474"/>
    </location>
    <ligand>
        <name>D-xylotriose</name>
        <dbReference type="ChEBI" id="CHEBI:62783"/>
        <label>2</label>
    </ligand>
</feature>
<feature type="binding site" evidence="2">
    <location>
        <position position="501"/>
    </location>
    <ligand>
        <name>D-xylotriose</name>
        <dbReference type="ChEBI" id="CHEBI:62783"/>
        <label>2</label>
    </ligand>
</feature>
<feature type="binding site" evidence="2">
    <location>
        <position position="503"/>
    </location>
    <ligand>
        <name>Ca(2+)</name>
        <dbReference type="ChEBI" id="CHEBI:29108"/>
        <label>2</label>
    </ligand>
</feature>
<evidence type="ECO:0000250" key="1"/>
<evidence type="ECO:0000250" key="2">
    <source>
        <dbReference type="UniProtKB" id="Q8GJ44"/>
    </source>
</evidence>
<evidence type="ECO:0000255" key="3"/>
<evidence type="ECO:0000255" key="4">
    <source>
        <dbReference type="PROSITE-ProRule" id="PRU00523"/>
    </source>
</evidence>
<evidence type="ECO:0000255" key="5">
    <source>
        <dbReference type="PROSITE-ProRule" id="PRU01097"/>
    </source>
</evidence>
<evidence type="ECO:0000255" key="6">
    <source>
        <dbReference type="PROSITE-ProRule" id="PRU10062"/>
    </source>
</evidence>
<evidence type="ECO:0000255" key="7">
    <source>
        <dbReference type="PROSITE-ProRule" id="PRU10063"/>
    </source>
</evidence>
<evidence type="ECO:0000305" key="8"/>
<sequence length="512" mass="55843">MKRKVKKMAAMATSIIMAIMIILHSIPVLAGRIIYDNETGTHGGYDYELWKDYGNTIMELNDGGTFSCQWSNIGNALFRKGRKFNSDKTYQELGDIVVEYGCDYNPNGNSYLCVYGWTRNPLVEYYIVESWGSWRPPGATPKGTITQWMAGTYEIYETTRVNQPSIDGTATFQQYWSVRTSKRTSGTISVTEHFKQWERMGMRMGKMYEVALTVEGYQSSGYANVYKNEIRIGANPTPAPSQSPIRRDAFSIIEAEEYNSTNSSTLQVIGTPNNGRGIGYIENGNTVTYSNIDFGSGATGFSATVATEVNTSIQIRSDSPTGTLLGTLYVSSTGSWNTYQTVSTNISKITGVHDIVLVFSGPVNVDNFIFSRSSPVPAPGDNTRDAYSIIQAEDYDSSYGPNLQIFSLPGGGSAIGYIENGYSTTYKNIDFGDGATSVTARVATQNATTIQVRLGSPSGTLLGTIYVGSTGSFDTYRDVSATISNTAGVKDIVLVFSGPVNVDWFVFSKSGT</sequence>
<gene>
    <name type="primary">xynA</name>
</gene>
<reference key="1">
    <citation type="journal article" date="1993" name="Biosci. Biotechnol. Biochem.">
        <title>Nucleotide sequence of the Clostridium stercorarium xynA gene encoding xylanase A: identification of catalytic and cellulose binding domains.</title>
        <authorList>
            <person name="Sakka K."/>
            <person name="Kojima Y."/>
            <person name="Kondo T."/>
            <person name="Karita S."/>
            <person name="Ohmiya K."/>
            <person name="Shimada K."/>
        </authorList>
    </citation>
    <scope>NUCLEOTIDE SEQUENCE [GENOMIC DNA]</scope>
    <scope>PROTEIN SEQUENCE OF 31-40</scope>
    <source>
        <strain>F-9</strain>
    </source>
</reference>
<reference key="2">
    <citation type="submission" date="1995-09" db="EMBL/GenBank/DDBJ databases">
        <authorList>
            <person name="Sakka K."/>
        </authorList>
    </citation>
    <scope>SEQUENCE REVISION</scope>
</reference>
<comment type="catalytic activity">
    <reaction>
        <text>Endohydrolysis of (1-&gt;4)-beta-D-xylosidic linkages in xylans.</text>
        <dbReference type="EC" id="3.2.1.8"/>
    </reaction>
</comment>
<comment type="biophysicochemical properties">
    <temperatureDependence>
        <text>Optimum temperature is 70 degrees Celsius. Thermostable.</text>
    </temperatureDependence>
</comment>
<comment type="pathway">
    <text>Glycan degradation; xylan degradation.</text>
</comment>
<comment type="domain">
    <text evidence="1">XynA is a modular enzyme. The number of CBM6 (carbohydrate binding type-6) domains varies between strains. The polymeric substrate can interact with several of these CBM6 domains (By similarity).</text>
</comment>
<comment type="similarity">
    <text evidence="8">Belongs to the glycosyl hydrolase 11 (cellulase G) family.</text>
</comment>